<accession>Q9Z898</accession>
<accession>Q9JS42</accession>
<accession>Q9Z5Q4</accession>
<organism>
    <name type="scientific">Chlamydia pneumoniae</name>
    <name type="common">Chlamydophila pneumoniae</name>
    <dbReference type="NCBI Taxonomy" id="83558"/>
    <lineage>
        <taxon>Bacteria</taxon>
        <taxon>Pseudomonadati</taxon>
        <taxon>Chlamydiota</taxon>
        <taxon>Chlamydiia</taxon>
        <taxon>Chlamydiales</taxon>
        <taxon>Chlamydiaceae</taxon>
        <taxon>Chlamydia/Chlamydophila group</taxon>
        <taxon>Chlamydia</taxon>
    </lineage>
</organism>
<dbReference type="EMBL" id="AE001363">
    <property type="protein sequence ID" value="AAD18589.1"/>
    <property type="molecule type" value="Genomic_DNA"/>
</dbReference>
<dbReference type="EMBL" id="AE002161">
    <property type="protein sequence ID" value="AAF38165.1"/>
    <property type="molecule type" value="Genomic_DNA"/>
</dbReference>
<dbReference type="EMBL" id="BA000008">
    <property type="protein sequence ID" value="BAA98653.1"/>
    <property type="molecule type" value="Genomic_DNA"/>
</dbReference>
<dbReference type="EMBL" id="AE009440">
    <property type="protein sequence ID" value="AAP98393.1"/>
    <property type="molecule type" value="Genomic_DNA"/>
</dbReference>
<dbReference type="EMBL" id="AJ133034">
    <property type="protein sequence ID" value="CAB37067.1"/>
    <property type="molecule type" value="Genomic_DNA"/>
</dbReference>
<dbReference type="PIR" id="B81591">
    <property type="entry name" value="B81591"/>
</dbReference>
<dbReference type="PIR" id="C72078">
    <property type="entry name" value="C72078"/>
</dbReference>
<dbReference type="PIR" id="C86546">
    <property type="entry name" value="C86546"/>
</dbReference>
<dbReference type="RefSeq" id="NP_224645.1">
    <property type="nucleotide sequence ID" value="NC_000922.1"/>
</dbReference>
<dbReference type="RefSeq" id="WP_010883088.1">
    <property type="nucleotide sequence ID" value="NZ_LN847257.1"/>
</dbReference>
<dbReference type="RefSeq" id="WP_010892029.1">
    <property type="nucleotide sequence ID" value="NZ_LN846995.1"/>
</dbReference>
<dbReference type="STRING" id="406984.CPK_ORF00958"/>
<dbReference type="GeneID" id="45050492"/>
<dbReference type="KEGG" id="cpa:CP_0308"/>
<dbReference type="KEGG" id="cpj:pmp_7"/>
<dbReference type="KEGG" id="cpn:CPn_0445"/>
<dbReference type="KEGG" id="cpt:CpB0462"/>
<dbReference type="PATRIC" id="fig|115713.3.peg.494"/>
<dbReference type="eggNOG" id="COG3210">
    <property type="taxonomic scope" value="Bacteria"/>
</dbReference>
<dbReference type="HOGENOM" id="CLU_004549_1_1_0"/>
<dbReference type="OrthoDB" id="16650at2"/>
<dbReference type="Proteomes" id="UP000000583">
    <property type="component" value="Chromosome"/>
</dbReference>
<dbReference type="Proteomes" id="UP000000801">
    <property type="component" value="Chromosome"/>
</dbReference>
<dbReference type="GO" id="GO:0009279">
    <property type="term" value="C:cell outer membrane"/>
    <property type="evidence" value="ECO:0007669"/>
    <property type="project" value="UniProtKB-SubCell"/>
</dbReference>
<dbReference type="GO" id="GO:0005576">
    <property type="term" value="C:extracellular region"/>
    <property type="evidence" value="ECO:0007669"/>
    <property type="project" value="UniProtKB-KW"/>
</dbReference>
<dbReference type="InterPro" id="IPR005546">
    <property type="entry name" value="Autotransporte_beta"/>
</dbReference>
<dbReference type="InterPro" id="IPR036709">
    <property type="entry name" value="Autotransporte_beta_dom_sf"/>
</dbReference>
<dbReference type="InterPro" id="IPR011427">
    <property type="entry name" value="Polymorphic_membr_middle"/>
</dbReference>
<dbReference type="InterPro" id="IPR003368">
    <property type="entry name" value="POMP_repeat"/>
</dbReference>
<dbReference type="NCBIfam" id="TIGR01376">
    <property type="entry name" value="POMP_repeat"/>
    <property type="match status" value="3"/>
</dbReference>
<dbReference type="Pfam" id="PF02415">
    <property type="entry name" value="Chlam_PMP"/>
    <property type="match status" value="3"/>
</dbReference>
<dbReference type="Pfam" id="PF07548">
    <property type="entry name" value="ChlamPMP_M"/>
    <property type="match status" value="1"/>
</dbReference>
<dbReference type="SMART" id="SM00869">
    <property type="entry name" value="Autotransporter"/>
    <property type="match status" value="1"/>
</dbReference>
<dbReference type="SUPFAM" id="SSF103515">
    <property type="entry name" value="Autotransporter"/>
    <property type="match status" value="1"/>
</dbReference>
<dbReference type="PROSITE" id="PS51208">
    <property type="entry name" value="AUTOTRANSPORTER"/>
    <property type="match status" value="1"/>
</dbReference>
<sequence>MKSSVSWLFFSSIPLFSSLSIVAAEVTLDSSNNSYDGSNGTTFTVFSTTDAAAGTTYSLLSDVSFQNAGALGIPLASGCFLEAGGDLTFQGNQHALKFAFINAGSSAGTVASTSAADKNLLFNDFSRLSIISCPSLLLSPTGQCALKSVGNLSLTGNSQIIFTQNFSSDNGGVINTKNFLLSGTSQFASFSRNQAFTGKQGGVVYATGTITIENSPGIVSFSQNLAKGSGGALYSTDNCSITDNFQVIFDGNSAWEAAQAQGGAICCTTTDKTVTLTGNKNLSFTNNTALTYGGAISGLKVSISAGGPTLFQSNISGSSAGQGGGGAINIASAGELALSATSGDITFNNNQVTNGSTSTRNAINIIDTAKVTSIRAATGQSIYFYDPITNPGTAASTDTLNLNLADANSEIEYGGAIVFSGEKLSPTEKAIAANVTSTIRQPAVLARGDLVLRDGVTVTFKDLTQSPGSRILMDGGTTLSAKEANLSLNGLAVNLSSLDGTNKAALKTEAADKNISLSGTIALIDTEGSFYENHNLKSASTYPLLELTTAGANGTITLGALSTLTLQEPETHYGYQGNWQLSWANATSSKIGSINWTRTGYIPSPERKSNLPLNSLWGNFIDIRSINQLIETKSSGEPFERELWLSGIANFFYRDSMPTRHGFRHISGGYALGITATTPAEDQLTFAFCQLFARDRNHITGKNHGDTYGASLYFHHTEGLFDIANFLWGKATRAPWVLSEISQIIPLSFDAKFSYLHTDNHMKTYYTDNSIIKGSWRNDAFCADLGASLPFVISVPYLLKEVEPFVKVQYIYAHQQDFYERYAEGRAFNKSELINVEIPIGVTFERDSKSEKGTYDLTLMYILDAYRRNPKCQTSLIASDANWMAYGTNLARQGFSVRAANHFQVNPHMEIFGQFAFEVRSSSRNYNTNLGSKFCF</sequence>
<reference key="1">
    <citation type="journal article" date="1999" name="Nat. Genet.">
        <title>Comparative genomes of Chlamydia pneumoniae and C. trachomatis.</title>
        <authorList>
            <person name="Kalman S."/>
            <person name="Mitchell W.P."/>
            <person name="Marathe R."/>
            <person name="Lammel C.J."/>
            <person name="Fan J."/>
            <person name="Hyman R.W."/>
            <person name="Olinger L."/>
            <person name="Grimwood J."/>
            <person name="Davis R.W."/>
            <person name="Stephens R.S."/>
        </authorList>
    </citation>
    <scope>NUCLEOTIDE SEQUENCE [LARGE SCALE GENOMIC DNA]</scope>
    <source>
        <strain>CWL029</strain>
    </source>
</reference>
<reference key="2">
    <citation type="journal article" date="2000" name="Nucleic Acids Res.">
        <title>Genome sequences of Chlamydia trachomatis MoPn and Chlamydia pneumoniae AR39.</title>
        <authorList>
            <person name="Read T.D."/>
            <person name="Brunham R.C."/>
            <person name="Shen C."/>
            <person name="Gill S.R."/>
            <person name="Heidelberg J.F."/>
            <person name="White O."/>
            <person name="Hickey E.K."/>
            <person name="Peterson J.D."/>
            <person name="Utterback T.R."/>
            <person name="Berry K.J."/>
            <person name="Bass S."/>
            <person name="Linher K.D."/>
            <person name="Weidman J.F."/>
            <person name="Khouri H.M."/>
            <person name="Craven B."/>
            <person name="Bowman C."/>
            <person name="Dodson R.J."/>
            <person name="Gwinn M.L."/>
            <person name="Nelson W.C."/>
            <person name="DeBoy R.T."/>
            <person name="Kolonay J.F."/>
            <person name="McClarty G."/>
            <person name="Salzberg S.L."/>
            <person name="Eisen J.A."/>
            <person name="Fraser C.M."/>
        </authorList>
    </citation>
    <scope>NUCLEOTIDE SEQUENCE [LARGE SCALE GENOMIC DNA]</scope>
    <source>
        <strain>AR39</strain>
    </source>
</reference>
<reference key="3">
    <citation type="journal article" date="2000" name="Nucleic Acids Res.">
        <title>Comparison of whole genome sequences of Chlamydia pneumoniae J138 from Japan and CWL029 from USA.</title>
        <authorList>
            <person name="Shirai M."/>
            <person name="Hirakawa H."/>
            <person name="Kimoto M."/>
            <person name="Tabuchi M."/>
            <person name="Kishi F."/>
            <person name="Ouchi K."/>
            <person name="Shiba T."/>
            <person name="Ishii K."/>
            <person name="Hattori M."/>
            <person name="Kuhara S."/>
            <person name="Nakazawa T."/>
        </authorList>
    </citation>
    <scope>NUCLEOTIDE SEQUENCE [LARGE SCALE GENOMIC DNA]</scope>
    <source>
        <strain>J138</strain>
    </source>
</reference>
<reference key="4">
    <citation type="submission" date="2002-05" db="EMBL/GenBank/DDBJ databases">
        <title>The genome sequence of Chlamydia pneumoniae TW183 and comparison with other Chlamydia strains based on whole genome sequence analysis.</title>
        <authorList>
            <person name="Geng M.M."/>
            <person name="Schuhmacher A."/>
            <person name="Muehldorfer I."/>
            <person name="Bensch K.W."/>
            <person name="Schaefer K.P."/>
            <person name="Schneider S."/>
            <person name="Pohl T."/>
            <person name="Essig A."/>
            <person name="Marre R."/>
            <person name="Melchers K."/>
        </authorList>
    </citation>
    <scope>NUCLEOTIDE SEQUENCE [LARGE SCALE GENOMIC DNA]</scope>
    <source>
        <strain>TW-183</strain>
    </source>
</reference>
<reference key="5">
    <citation type="journal article" date="1999" name="Am. Heart J.">
        <title>Molecular biology of Chlamydia pneumoniae surface proteins and their role in immunopathogenicity.</title>
        <authorList>
            <person name="Christiansen G."/>
            <person name="Boesen T."/>
            <person name="Hjerno K."/>
            <person name="Daugaard L."/>
            <person name="Mygind P."/>
            <person name="Madsen A.S."/>
            <person name="Knudsen K."/>
            <person name="Falk E."/>
            <person name="Birkelund S."/>
        </authorList>
    </citation>
    <scope>NUCLEOTIDE SEQUENCE [GENOMIC DNA] OF 658-936</scope>
    <source>
        <strain>CWL029 / VR1310</strain>
    </source>
</reference>
<comment type="subcellular location">
    <subcellularLocation>
        <location>Secreted</location>
        <location>Cell wall</location>
    </subcellularLocation>
    <subcellularLocation>
        <location evidence="3">Cell outer membrane</location>
        <topology evidence="3">Peripheral membrane protein</topology>
        <orientation evidence="3">Extracellular side</orientation>
    </subcellularLocation>
</comment>
<comment type="developmental stage">
    <text>Elementary body.</text>
</comment>
<comment type="similarity">
    <text evidence="3">Belongs to the PMP outer membrane protein family.</text>
</comment>
<feature type="signal peptide" evidence="1">
    <location>
        <begin position="1"/>
        <end position="23"/>
    </location>
</feature>
<feature type="chain" id="PRO_0000024737" description="Probable outer membrane protein pmp7">
    <location>
        <begin position="24"/>
        <end position="936"/>
    </location>
</feature>
<feature type="domain" description="Autotransporter" evidence="2">
    <location>
        <begin position="636"/>
        <end position="936"/>
    </location>
</feature>
<feature type="sequence conflict" description="In Ref. 5." evidence="3" ref="5">
    <original>PTRHGFRHI</original>
    <variation>EDNIRYRHN</variation>
    <location>
        <begin position="658"/>
        <end position="666"/>
    </location>
</feature>
<feature type="sequence conflict" description="In Ref. 1, 4 and 5." evidence="3" ref="1 4 5">
    <original>Y</original>
    <variation>H</variation>
    <location>
        <position position="822"/>
    </location>
</feature>
<proteinExistence type="evidence at transcript level"/>
<evidence type="ECO:0000255" key="1"/>
<evidence type="ECO:0000255" key="2">
    <source>
        <dbReference type="PROSITE-ProRule" id="PRU00556"/>
    </source>
</evidence>
<evidence type="ECO:0000305" key="3"/>
<keyword id="KW-0998">Cell outer membrane</keyword>
<keyword id="KW-0134">Cell wall</keyword>
<keyword id="KW-0472">Membrane</keyword>
<keyword id="KW-0964">Secreted</keyword>
<keyword id="KW-0732">Signal</keyword>
<keyword id="KW-0812">Transmembrane</keyword>
<keyword id="KW-1134">Transmembrane beta strand</keyword>
<gene>
    <name type="primary">pmp7</name>
    <name type="synonym">omp12</name>
    <name type="ordered locus">CPn_0445</name>
    <name type="ordered locus">CP_0308</name>
    <name type="ordered locus">CpB0462</name>
</gene>
<protein>
    <recommendedName>
        <fullName>Probable outer membrane protein pmp7</fullName>
    </recommendedName>
    <alternativeName>
        <fullName>Outer membrane protein 12</fullName>
    </alternativeName>
    <alternativeName>
        <fullName>Polymorphic membrane protein 7</fullName>
    </alternativeName>
</protein>
<name>PMP7_CHLPN</name>